<protein>
    <recommendedName>
        <fullName evidence="1">Malate dehydrogenase</fullName>
        <ecNumber evidence="1">1.1.1.37</ecNumber>
    </recommendedName>
</protein>
<accession>Q1RIT9</accession>
<feature type="chain" id="PRO_0000241966" description="Malate dehydrogenase">
    <location>
        <begin position="1"/>
        <end position="314"/>
    </location>
</feature>
<feature type="active site" description="Proton acceptor" evidence="1">
    <location>
        <position position="177"/>
    </location>
</feature>
<feature type="binding site" evidence="1">
    <location>
        <begin position="11"/>
        <end position="16"/>
    </location>
    <ligand>
        <name>NAD(+)</name>
        <dbReference type="ChEBI" id="CHEBI:57540"/>
    </ligand>
</feature>
<feature type="binding site" evidence="1">
    <location>
        <position position="35"/>
    </location>
    <ligand>
        <name>NAD(+)</name>
        <dbReference type="ChEBI" id="CHEBI:57540"/>
    </ligand>
</feature>
<feature type="binding site" evidence="1">
    <location>
        <position position="84"/>
    </location>
    <ligand>
        <name>substrate</name>
    </ligand>
</feature>
<feature type="binding site" evidence="1">
    <location>
        <position position="90"/>
    </location>
    <ligand>
        <name>substrate</name>
    </ligand>
</feature>
<feature type="binding site" evidence="1">
    <location>
        <position position="97"/>
    </location>
    <ligand>
        <name>NAD(+)</name>
        <dbReference type="ChEBI" id="CHEBI:57540"/>
    </ligand>
</feature>
<feature type="binding site" evidence="1">
    <location>
        <begin position="120"/>
        <end position="122"/>
    </location>
    <ligand>
        <name>NAD(+)</name>
        <dbReference type="ChEBI" id="CHEBI:57540"/>
    </ligand>
</feature>
<feature type="binding site" evidence="1">
    <location>
        <position position="122"/>
    </location>
    <ligand>
        <name>substrate</name>
    </ligand>
</feature>
<feature type="binding site" evidence="1">
    <location>
        <position position="153"/>
    </location>
    <ligand>
        <name>substrate</name>
    </ligand>
</feature>
<dbReference type="EC" id="1.1.1.37" evidence="1"/>
<dbReference type="EMBL" id="CP000087">
    <property type="protein sequence ID" value="ABE04725.1"/>
    <property type="molecule type" value="Genomic_DNA"/>
</dbReference>
<dbReference type="RefSeq" id="WP_011477313.1">
    <property type="nucleotide sequence ID" value="NC_007940.1"/>
</dbReference>
<dbReference type="SMR" id="Q1RIT9"/>
<dbReference type="KEGG" id="rbe:RBE_0644"/>
<dbReference type="eggNOG" id="COG0039">
    <property type="taxonomic scope" value="Bacteria"/>
</dbReference>
<dbReference type="HOGENOM" id="CLU_045401_2_1_5"/>
<dbReference type="OrthoDB" id="9802969at2"/>
<dbReference type="Proteomes" id="UP000001951">
    <property type="component" value="Chromosome"/>
</dbReference>
<dbReference type="GO" id="GO:0004459">
    <property type="term" value="F:L-lactate dehydrogenase activity"/>
    <property type="evidence" value="ECO:0007669"/>
    <property type="project" value="TreeGrafter"/>
</dbReference>
<dbReference type="GO" id="GO:0030060">
    <property type="term" value="F:L-malate dehydrogenase (NAD+) activity"/>
    <property type="evidence" value="ECO:0007669"/>
    <property type="project" value="UniProtKB-UniRule"/>
</dbReference>
<dbReference type="GO" id="GO:0006089">
    <property type="term" value="P:lactate metabolic process"/>
    <property type="evidence" value="ECO:0007669"/>
    <property type="project" value="TreeGrafter"/>
</dbReference>
<dbReference type="GO" id="GO:0006099">
    <property type="term" value="P:tricarboxylic acid cycle"/>
    <property type="evidence" value="ECO:0007669"/>
    <property type="project" value="UniProtKB-UniRule"/>
</dbReference>
<dbReference type="CDD" id="cd01339">
    <property type="entry name" value="LDH-like_MDH"/>
    <property type="match status" value="1"/>
</dbReference>
<dbReference type="FunFam" id="3.40.50.720:FF:000018">
    <property type="entry name" value="Malate dehydrogenase"/>
    <property type="match status" value="1"/>
</dbReference>
<dbReference type="FunFam" id="3.90.110.10:FF:000004">
    <property type="entry name" value="Malate dehydrogenase"/>
    <property type="match status" value="1"/>
</dbReference>
<dbReference type="Gene3D" id="3.90.110.10">
    <property type="entry name" value="Lactate dehydrogenase/glycoside hydrolase, family 4, C-terminal"/>
    <property type="match status" value="1"/>
</dbReference>
<dbReference type="Gene3D" id="3.40.50.720">
    <property type="entry name" value="NAD(P)-binding Rossmann-like Domain"/>
    <property type="match status" value="1"/>
</dbReference>
<dbReference type="HAMAP" id="MF_00487">
    <property type="entry name" value="Malate_dehydrog_3"/>
    <property type="match status" value="1"/>
</dbReference>
<dbReference type="InterPro" id="IPR001557">
    <property type="entry name" value="L-lactate/malate_DH"/>
</dbReference>
<dbReference type="InterPro" id="IPR022383">
    <property type="entry name" value="Lactate/malate_DH_C"/>
</dbReference>
<dbReference type="InterPro" id="IPR001236">
    <property type="entry name" value="Lactate/malate_DH_N"/>
</dbReference>
<dbReference type="InterPro" id="IPR015955">
    <property type="entry name" value="Lactate_DH/Glyco_Ohase_4_C"/>
</dbReference>
<dbReference type="InterPro" id="IPR011275">
    <property type="entry name" value="Malate_DH_type3"/>
</dbReference>
<dbReference type="InterPro" id="IPR036291">
    <property type="entry name" value="NAD(P)-bd_dom_sf"/>
</dbReference>
<dbReference type="NCBIfam" id="TIGR01763">
    <property type="entry name" value="MalateDH_bact"/>
    <property type="match status" value="1"/>
</dbReference>
<dbReference type="NCBIfam" id="NF004863">
    <property type="entry name" value="PRK06223.1"/>
    <property type="match status" value="1"/>
</dbReference>
<dbReference type="PANTHER" id="PTHR43128">
    <property type="entry name" value="L-2-HYDROXYCARBOXYLATE DEHYDROGENASE (NAD(P)(+))"/>
    <property type="match status" value="1"/>
</dbReference>
<dbReference type="PANTHER" id="PTHR43128:SF16">
    <property type="entry name" value="L-LACTATE DEHYDROGENASE"/>
    <property type="match status" value="1"/>
</dbReference>
<dbReference type="Pfam" id="PF02866">
    <property type="entry name" value="Ldh_1_C"/>
    <property type="match status" value="1"/>
</dbReference>
<dbReference type="Pfam" id="PF00056">
    <property type="entry name" value="Ldh_1_N"/>
    <property type="match status" value="1"/>
</dbReference>
<dbReference type="PIRSF" id="PIRSF000102">
    <property type="entry name" value="Lac_mal_DH"/>
    <property type="match status" value="1"/>
</dbReference>
<dbReference type="PRINTS" id="PR00086">
    <property type="entry name" value="LLDHDRGNASE"/>
</dbReference>
<dbReference type="SUPFAM" id="SSF56327">
    <property type="entry name" value="LDH C-terminal domain-like"/>
    <property type="match status" value="1"/>
</dbReference>
<dbReference type="SUPFAM" id="SSF51735">
    <property type="entry name" value="NAD(P)-binding Rossmann-fold domains"/>
    <property type="match status" value="1"/>
</dbReference>
<gene>
    <name evidence="1" type="primary">mdh</name>
    <name type="ordered locus">RBE_0644</name>
</gene>
<name>MDH_RICBR</name>
<reference key="1">
    <citation type="journal article" date="2006" name="PLoS Genet.">
        <title>Genome sequence of Rickettsia bellii illuminates the role of amoebae in gene exchanges between intracellular pathogens.</title>
        <authorList>
            <person name="Ogata H."/>
            <person name="La Scola B."/>
            <person name="Audic S."/>
            <person name="Renesto P."/>
            <person name="Blanc G."/>
            <person name="Robert C."/>
            <person name="Fournier P.-E."/>
            <person name="Claverie J.-M."/>
            <person name="Raoult D."/>
        </authorList>
    </citation>
    <scope>NUCLEOTIDE SEQUENCE [LARGE SCALE GENOMIC DNA]</scope>
    <source>
        <strain>RML369-C</strain>
    </source>
</reference>
<keyword id="KW-0520">NAD</keyword>
<keyword id="KW-0560">Oxidoreductase</keyword>
<keyword id="KW-0816">Tricarboxylic acid cycle</keyword>
<proteinExistence type="inferred from homology"/>
<comment type="function">
    <text evidence="1">Catalyzes the reversible oxidation of malate to oxaloacetate.</text>
</comment>
<comment type="catalytic activity">
    <reaction evidence="1">
        <text>(S)-malate + NAD(+) = oxaloacetate + NADH + H(+)</text>
        <dbReference type="Rhea" id="RHEA:21432"/>
        <dbReference type="ChEBI" id="CHEBI:15378"/>
        <dbReference type="ChEBI" id="CHEBI:15589"/>
        <dbReference type="ChEBI" id="CHEBI:16452"/>
        <dbReference type="ChEBI" id="CHEBI:57540"/>
        <dbReference type="ChEBI" id="CHEBI:57945"/>
        <dbReference type="EC" id="1.1.1.37"/>
    </reaction>
</comment>
<comment type="similarity">
    <text evidence="1">Belongs to the LDH/MDH superfamily. MDH type 3 family.</text>
</comment>
<sequence length="314" mass="33651">MKKNPKILLIGSGNIGGTLAHLISLKNLGDIVLFDVAEGIPQGKALDIMQANTLAGSDIKIKGTNDYKDIEGSDAIIITAGLPRKPGMSRDDLISVNTGIMKSVAENVKKYAPNAFVIVITNPLDVMVYVMLKESGLPHNKVIGMAGVLDSSRFNFFLAEEFKVSTNSVSSIVLGGHGDAMVPLARYSTVKGVPIPDLVKMGLSTNERIEKIIDRTRNGGGEIVALLKTGSAYYAPAASAVEMLESYLQDKRQILTCAAYLQGEYGVKDLYAGVPIIIGKNGVEKVIELQLTTNEQALFDKSVDGVRKLIEAVK</sequence>
<evidence type="ECO:0000255" key="1">
    <source>
        <dbReference type="HAMAP-Rule" id="MF_00487"/>
    </source>
</evidence>
<organism>
    <name type="scientific">Rickettsia bellii (strain RML369-C)</name>
    <dbReference type="NCBI Taxonomy" id="336407"/>
    <lineage>
        <taxon>Bacteria</taxon>
        <taxon>Pseudomonadati</taxon>
        <taxon>Pseudomonadota</taxon>
        <taxon>Alphaproteobacteria</taxon>
        <taxon>Rickettsiales</taxon>
        <taxon>Rickettsiaceae</taxon>
        <taxon>Rickettsieae</taxon>
        <taxon>Rickettsia</taxon>
        <taxon>belli group</taxon>
    </lineage>
</organism>